<organism>
    <name type="scientific">Actinobacillus pleuropneumoniae serotype 5b (strain L20)</name>
    <dbReference type="NCBI Taxonomy" id="416269"/>
    <lineage>
        <taxon>Bacteria</taxon>
        <taxon>Pseudomonadati</taxon>
        <taxon>Pseudomonadota</taxon>
        <taxon>Gammaproteobacteria</taxon>
        <taxon>Pasteurellales</taxon>
        <taxon>Pasteurellaceae</taxon>
        <taxon>Actinobacillus</taxon>
    </lineage>
</organism>
<proteinExistence type="inferred from homology"/>
<name>FABH_ACTP2</name>
<feature type="chain" id="PRO_1000056320" description="Beta-ketoacyl-[acyl-carrier-protein] synthase III">
    <location>
        <begin position="1"/>
        <end position="316"/>
    </location>
</feature>
<feature type="region of interest" description="ACP-binding" evidence="1">
    <location>
        <begin position="244"/>
        <end position="248"/>
    </location>
</feature>
<feature type="active site" evidence="1">
    <location>
        <position position="112"/>
    </location>
</feature>
<feature type="active site" evidence="1">
    <location>
        <position position="243"/>
    </location>
</feature>
<feature type="active site" evidence="1">
    <location>
        <position position="273"/>
    </location>
</feature>
<comment type="function">
    <text evidence="1">Catalyzes the condensation reaction of fatty acid synthesis by the addition to an acyl acceptor of two carbons from malonyl-ACP. Catalyzes the first condensation reaction which initiates fatty acid synthesis and may therefore play a role in governing the total rate of fatty acid production. Possesses both acetoacetyl-ACP synthase and acetyl transacylase activities. Its substrate specificity determines the biosynthesis of branched-chain and/or straight-chain of fatty acids.</text>
</comment>
<comment type="catalytic activity">
    <reaction evidence="1">
        <text>malonyl-[ACP] + acetyl-CoA + H(+) = 3-oxobutanoyl-[ACP] + CO2 + CoA</text>
        <dbReference type="Rhea" id="RHEA:12080"/>
        <dbReference type="Rhea" id="RHEA-COMP:9623"/>
        <dbReference type="Rhea" id="RHEA-COMP:9625"/>
        <dbReference type="ChEBI" id="CHEBI:15378"/>
        <dbReference type="ChEBI" id="CHEBI:16526"/>
        <dbReference type="ChEBI" id="CHEBI:57287"/>
        <dbReference type="ChEBI" id="CHEBI:57288"/>
        <dbReference type="ChEBI" id="CHEBI:78449"/>
        <dbReference type="ChEBI" id="CHEBI:78450"/>
        <dbReference type="EC" id="2.3.1.180"/>
    </reaction>
</comment>
<comment type="pathway">
    <text evidence="1">Lipid metabolism; fatty acid biosynthesis.</text>
</comment>
<comment type="subunit">
    <text evidence="1">Homodimer.</text>
</comment>
<comment type="subcellular location">
    <subcellularLocation>
        <location evidence="1">Cytoplasm</location>
    </subcellularLocation>
</comment>
<comment type="domain">
    <text evidence="1">The last Arg residue of the ACP-binding site is essential for the weak association between ACP/AcpP and FabH.</text>
</comment>
<comment type="similarity">
    <text evidence="1">Belongs to the thiolase-like superfamily. FabH family.</text>
</comment>
<gene>
    <name evidence="1" type="primary">fabH</name>
    <name type="ordered locus">APL_1384</name>
</gene>
<evidence type="ECO:0000255" key="1">
    <source>
        <dbReference type="HAMAP-Rule" id="MF_01815"/>
    </source>
</evidence>
<reference key="1">
    <citation type="journal article" date="2008" name="J. Bacteriol.">
        <title>The complete genome sequence of Actinobacillus pleuropneumoniae L20 (serotype 5b).</title>
        <authorList>
            <person name="Foote S.J."/>
            <person name="Bosse J.T."/>
            <person name="Bouevitch A.B."/>
            <person name="Langford P.R."/>
            <person name="Young N.M."/>
            <person name="Nash J.H.E."/>
        </authorList>
    </citation>
    <scope>NUCLEOTIDE SEQUENCE [LARGE SCALE GENOMIC DNA]</scope>
    <source>
        <strain>L20</strain>
    </source>
</reference>
<keyword id="KW-0012">Acyltransferase</keyword>
<keyword id="KW-0963">Cytoplasm</keyword>
<keyword id="KW-0275">Fatty acid biosynthesis</keyword>
<keyword id="KW-0276">Fatty acid metabolism</keyword>
<keyword id="KW-0444">Lipid biosynthesis</keyword>
<keyword id="KW-0443">Lipid metabolism</keyword>
<keyword id="KW-0511">Multifunctional enzyme</keyword>
<keyword id="KW-1185">Reference proteome</keyword>
<keyword id="KW-0808">Transferase</keyword>
<sequence length="316" mass="34014">MYSKILATGSYLPAQIRTNADLEKMVDTSDEWIFTRSGMKERRIAAADETVATMGAQAAKNALEIANIDHNEIDLIVVGTTTNSHAYPSAACQIQGMLDIQDAIAFDVAAACTGFVYALSVADQFIRSGKIKKALVIGSDLNSRALDETDRSTVVLFGDGAGAVILEASEEQGIISTHLHSSSDTEYMLALPAQKRGDEKSGFIQMQGNATFKLAVGQLSSVVEETLEANNLQKSDLDWLVPHQANIRIIAATAKKLEMDMSQVVLTVEKYGNNSAATVPVALDEAVRDGRIQRGQLLLLEAFGGGWTWGSALVRF</sequence>
<protein>
    <recommendedName>
        <fullName evidence="1">Beta-ketoacyl-[acyl-carrier-protein] synthase III</fullName>
        <shortName evidence="1">Beta-ketoacyl-ACP synthase III</shortName>
        <shortName evidence="1">KAS III</shortName>
        <ecNumber evidence="1">2.3.1.180</ecNumber>
    </recommendedName>
    <alternativeName>
        <fullName evidence="1">3-oxoacyl-[acyl-carrier-protein] synthase 3</fullName>
    </alternativeName>
    <alternativeName>
        <fullName evidence="1">3-oxoacyl-[acyl-carrier-protein] synthase III</fullName>
    </alternativeName>
</protein>
<dbReference type="EC" id="2.3.1.180" evidence="1"/>
<dbReference type="EMBL" id="CP000569">
    <property type="protein sequence ID" value="ABN74468.1"/>
    <property type="molecule type" value="Genomic_DNA"/>
</dbReference>
<dbReference type="RefSeq" id="WP_005601991.1">
    <property type="nucleotide sequence ID" value="NC_009053.1"/>
</dbReference>
<dbReference type="SMR" id="A3N232"/>
<dbReference type="STRING" id="416269.APL_1384"/>
<dbReference type="EnsemblBacteria" id="ABN74468">
    <property type="protein sequence ID" value="ABN74468"/>
    <property type="gene ID" value="APL_1384"/>
</dbReference>
<dbReference type="KEGG" id="apl:APL_1384"/>
<dbReference type="eggNOG" id="COG0332">
    <property type="taxonomic scope" value="Bacteria"/>
</dbReference>
<dbReference type="HOGENOM" id="CLU_039592_4_1_6"/>
<dbReference type="UniPathway" id="UPA00094"/>
<dbReference type="Proteomes" id="UP000001432">
    <property type="component" value="Chromosome"/>
</dbReference>
<dbReference type="GO" id="GO:0005737">
    <property type="term" value="C:cytoplasm"/>
    <property type="evidence" value="ECO:0007669"/>
    <property type="project" value="UniProtKB-SubCell"/>
</dbReference>
<dbReference type="GO" id="GO:0004315">
    <property type="term" value="F:3-oxoacyl-[acyl-carrier-protein] synthase activity"/>
    <property type="evidence" value="ECO:0007669"/>
    <property type="project" value="InterPro"/>
</dbReference>
<dbReference type="GO" id="GO:0033818">
    <property type="term" value="F:beta-ketoacyl-acyl-carrier-protein synthase III activity"/>
    <property type="evidence" value="ECO:0007669"/>
    <property type="project" value="UniProtKB-UniRule"/>
</dbReference>
<dbReference type="GO" id="GO:0006633">
    <property type="term" value="P:fatty acid biosynthetic process"/>
    <property type="evidence" value="ECO:0007669"/>
    <property type="project" value="UniProtKB-UniRule"/>
</dbReference>
<dbReference type="GO" id="GO:0044550">
    <property type="term" value="P:secondary metabolite biosynthetic process"/>
    <property type="evidence" value="ECO:0007669"/>
    <property type="project" value="TreeGrafter"/>
</dbReference>
<dbReference type="CDD" id="cd00830">
    <property type="entry name" value="KAS_III"/>
    <property type="match status" value="1"/>
</dbReference>
<dbReference type="FunFam" id="3.40.47.10:FF:000004">
    <property type="entry name" value="3-oxoacyl-[acyl-carrier-protein] synthase 3"/>
    <property type="match status" value="1"/>
</dbReference>
<dbReference type="Gene3D" id="3.40.47.10">
    <property type="match status" value="2"/>
</dbReference>
<dbReference type="HAMAP" id="MF_01815">
    <property type="entry name" value="FabH"/>
    <property type="match status" value="1"/>
</dbReference>
<dbReference type="InterPro" id="IPR013747">
    <property type="entry name" value="ACP_syn_III_C"/>
</dbReference>
<dbReference type="InterPro" id="IPR013751">
    <property type="entry name" value="ACP_syn_III_N"/>
</dbReference>
<dbReference type="InterPro" id="IPR004655">
    <property type="entry name" value="FabH"/>
</dbReference>
<dbReference type="InterPro" id="IPR016039">
    <property type="entry name" value="Thiolase-like"/>
</dbReference>
<dbReference type="NCBIfam" id="TIGR00747">
    <property type="entry name" value="fabH"/>
    <property type="match status" value="1"/>
</dbReference>
<dbReference type="NCBIfam" id="NF006829">
    <property type="entry name" value="PRK09352.1"/>
    <property type="match status" value="1"/>
</dbReference>
<dbReference type="PANTHER" id="PTHR34069">
    <property type="entry name" value="3-OXOACYL-[ACYL-CARRIER-PROTEIN] SYNTHASE 3"/>
    <property type="match status" value="1"/>
</dbReference>
<dbReference type="PANTHER" id="PTHR34069:SF2">
    <property type="entry name" value="BETA-KETOACYL-[ACYL-CARRIER-PROTEIN] SYNTHASE III"/>
    <property type="match status" value="1"/>
</dbReference>
<dbReference type="Pfam" id="PF08545">
    <property type="entry name" value="ACP_syn_III"/>
    <property type="match status" value="1"/>
</dbReference>
<dbReference type="Pfam" id="PF08541">
    <property type="entry name" value="ACP_syn_III_C"/>
    <property type="match status" value="1"/>
</dbReference>
<dbReference type="SUPFAM" id="SSF53901">
    <property type="entry name" value="Thiolase-like"/>
    <property type="match status" value="1"/>
</dbReference>
<accession>A3N232</accession>